<feature type="chain" id="PRO_0000089639" description="Chemoreceptor glutamine deamidase CheD">
    <location>
        <begin position="1"/>
        <end position="166"/>
    </location>
</feature>
<protein>
    <recommendedName>
        <fullName>Chemoreceptor glutamine deamidase CheD</fullName>
        <ecNumber>3.5.1.44</ecNumber>
    </recommendedName>
</protein>
<comment type="function">
    <text evidence="1 2 3">Deamidates 'Gln-593' and 'Gln-594' of the chemoreceptor McpA. In addition, deamidates other chemoreceptors, including McpB and McpC. CheD-mediated MCP (methyl-accepting chemotaxis proteins) deamidation is required for productive communication of the conformational signals of the chemoreceptors to the CheA kinase. CheD is absolutely required for a behavioral response mediated by McpC but is not required for the response to asparagine mediated by McpB. CheD is necessary for the generation of wild-type prestimulus CheA autophosphorylation levels. Also required for methylation of MCPs by CheR. In addition, enhances the activity of CheC 5-fold in vitro.</text>
</comment>
<comment type="catalytic activity">
    <reaction>
        <text>L-glutaminyl-[protein] + H2O = L-glutamyl-[protein] + NH4(+)</text>
        <dbReference type="Rhea" id="RHEA:16441"/>
        <dbReference type="Rhea" id="RHEA-COMP:10207"/>
        <dbReference type="Rhea" id="RHEA-COMP:10208"/>
        <dbReference type="ChEBI" id="CHEBI:15377"/>
        <dbReference type="ChEBI" id="CHEBI:28938"/>
        <dbReference type="ChEBI" id="CHEBI:29973"/>
        <dbReference type="ChEBI" id="CHEBI:30011"/>
        <dbReference type="EC" id="3.5.1.44"/>
    </reaction>
</comment>
<comment type="subunit">
    <text>Forms a complex with CheC.</text>
</comment>
<comment type="disruption phenotype">
    <text evidence="3">Cells exhibit poorly methylated receptors, are tumbly and have a decreased sensitivity to attractants.</text>
</comment>
<comment type="similarity">
    <text evidence="4">Belongs to the CheD family.</text>
</comment>
<proteinExistence type="evidence at protein level"/>
<accession>P40404</accession>
<reference key="1">
    <citation type="journal article" date="1988" name="J. Bacteriol.">
        <title>Cloning, sequencing, and disruption of the Bacillus subtilis sigma 28 gene.</title>
        <authorList>
            <person name="Helmann J.D."/>
            <person name="Marquez L.M."/>
            <person name="Chamberlin M.J."/>
        </authorList>
    </citation>
    <scope>NUCLEOTIDE SEQUENCE [GENOMIC DNA]</scope>
</reference>
<reference key="2">
    <citation type="journal article" date="1997" name="Nature">
        <title>The complete genome sequence of the Gram-positive bacterium Bacillus subtilis.</title>
        <authorList>
            <person name="Kunst F."/>
            <person name="Ogasawara N."/>
            <person name="Moszer I."/>
            <person name="Albertini A.M."/>
            <person name="Alloni G."/>
            <person name="Azevedo V."/>
            <person name="Bertero M.G."/>
            <person name="Bessieres P."/>
            <person name="Bolotin A."/>
            <person name="Borchert S."/>
            <person name="Borriss R."/>
            <person name="Boursier L."/>
            <person name="Brans A."/>
            <person name="Braun M."/>
            <person name="Brignell S.C."/>
            <person name="Bron S."/>
            <person name="Brouillet S."/>
            <person name="Bruschi C.V."/>
            <person name="Caldwell B."/>
            <person name="Capuano V."/>
            <person name="Carter N.M."/>
            <person name="Choi S.-K."/>
            <person name="Codani J.-J."/>
            <person name="Connerton I.F."/>
            <person name="Cummings N.J."/>
            <person name="Daniel R.A."/>
            <person name="Denizot F."/>
            <person name="Devine K.M."/>
            <person name="Duesterhoeft A."/>
            <person name="Ehrlich S.D."/>
            <person name="Emmerson P.T."/>
            <person name="Entian K.-D."/>
            <person name="Errington J."/>
            <person name="Fabret C."/>
            <person name="Ferrari E."/>
            <person name="Foulger D."/>
            <person name="Fritz C."/>
            <person name="Fujita M."/>
            <person name="Fujita Y."/>
            <person name="Fuma S."/>
            <person name="Galizzi A."/>
            <person name="Galleron N."/>
            <person name="Ghim S.-Y."/>
            <person name="Glaser P."/>
            <person name="Goffeau A."/>
            <person name="Golightly E.J."/>
            <person name="Grandi G."/>
            <person name="Guiseppi G."/>
            <person name="Guy B.J."/>
            <person name="Haga K."/>
            <person name="Haiech J."/>
            <person name="Harwood C.R."/>
            <person name="Henaut A."/>
            <person name="Hilbert H."/>
            <person name="Holsappel S."/>
            <person name="Hosono S."/>
            <person name="Hullo M.-F."/>
            <person name="Itaya M."/>
            <person name="Jones L.-M."/>
            <person name="Joris B."/>
            <person name="Karamata D."/>
            <person name="Kasahara Y."/>
            <person name="Klaerr-Blanchard M."/>
            <person name="Klein C."/>
            <person name="Kobayashi Y."/>
            <person name="Koetter P."/>
            <person name="Koningstein G."/>
            <person name="Krogh S."/>
            <person name="Kumano M."/>
            <person name="Kurita K."/>
            <person name="Lapidus A."/>
            <person name="Lardinois S."/>
            <person name="Lauber J."/>
            <person name="Lazarevic V."/>
            <person name="Lee S.-M."/>
            <person name="Levine A."/>
            <person name="Liu H."/>
            <person name="Masuda S."/>
            <person name="Mauel C."/>
            <person name="Medigue C."/>
            <person name="Medina N."/>
            <person name="Mellado R.P."/>
            <person name="Mizuno M."/>
            <person name="Moestl D."/>
            <person name="Nakai S."/>
            <person name="Noback M."/>
            <person name="Noone D."/>
            <person name="O'Reilly M."/>
            <person name="Ogawa K."/>
            <person name="Ogiwara A."/>
            <person name="Oudega B."/>
            <person name="Park S.-H."/>
            <person name="Parro V."/>
            <person name="Pohl T.M."/>
            <person name="Portetelle D."/>
            <person name="Porwollik S."/>
            <person name="Prescott A.M."/>
            <person name="Presecan E."/>
            <person name="Pujic P."/>
            <person name="Purnelle B."/>
            <person name="Rapoport G."/>
            <person name="Rey M."/>
            <person name="Reynolds S."/>
            <person name="Rieger M."/>
            <person name="Rivolta C."/>
            <person name="Rocha E."/>
            <person name="Roche B."/>
            <person name="Rose M."/>
            <person name="Sadaie Y."/>
            <person name="Sato T."/>
            <person name="Scanlan E."/>
            <person name="Schleich S."/>
            <person name="Schroeter R."/>
            <person name="Scoffone F."/>
            <person name="Sekiguchi J."/>
            <person name="Sekowska A."/>
            <person name="Seror S.J."/>
            <person name="Serror P."/>
            <person name="Shin B.-S."/>
            <person name="Soldo B."/>
            <person name="Sorokin A."/>
            <person name="Tacconi E."/>
            <person name="Takagi T."/>
            <person name="Takahashi H."/>
            <person name="Takemaru K."/>
            <person name="Takeuchi M."/>
            <person name="Tamakoshi A."/>
            <person name="Tanaka T."/>
            <person name="Terpstra P."/>
            <person name="Tognoni A."/>
            <person name="Tosato V."/>
            <person name="Uchiyama S."/>
            <person name="Vandenbol M."/>
            <person name="Vannier F."/>
            <person name="Vassarotti A."/>
            <person name="Viari A."/>
            <person name="Wambutt R."/>
            <person name="Wedler E."/>
            <person name="Wedler H."/>
            <person name="Weitzenegger T."/>
            <person name="Winters P."/>
            <person name="Wipat A."/>
            <person name="Yamamoto H."/>
            <person name="Yamane K."/>
            <person name="Yasumoto K."/>
            <person name="Yata K."/>
            <person name="Yoshida K."/>
            <person name="Yoshikawa H.-F."/>
            <person name="Zumstein E."/>
            <person name="Yoshikawa H."/>
            <person name="Danchin A."/>
        </authorList>
    </citation>
    <scope>NUCLEOTIDE SEQUENCE [LARGE SCALE GENOMIC DNA]</scope>
    <source>
        <strain>168</strain>
    </source>
</reference>
<reference key="3">
    <citation type="journal article" date="1995" name="Biochemistry">
        <title>Chemotactic methylation and behavior in Bacillus subtilis: role of two unique proteins, CheC and CheD.</title>
        <authorList>
            <person name="Rosario M.M.L."/>
            <person name="Kirby J.R."/>
            <person name="Bochar D.A."/>
            <person name="Ordal G.W."/>
        </authorList>
    </citation>
    <scope>ROLE IN CHEMOTAXIS</scope>
    <scope>DISRUPTION PHENOTYPE</scope>
</reference>
<reference key="4">
    <citation type="journal article" date="1996" name="Mol. Microbiol.">
        <title>CheC and CheD interact to regulate methylation of Bacillus subtilis methyl-accepting chemotaxis proteins.</title>
        <authorList>
            <person name="Rosario M.M.L."/>
            <person name="Ordal G.W."/>
        </authorList>
    </citation>
    <scope>INTERACTION WITH CHEC</scope>
</reference>
<reference key="5">
    <citation type="journal article" date="2002" name="J. Biol. Chem.">
        <title>Bacillus subtilis CheD is a chemoreceptor modification enzyme required for chemotaxis.</title>
        <authorList>
            <person name="Kristich C.J."/>
            <person name="Ordal G.W."/>
        </authorList>
    </citation>
    <scope>FUNCTION IN DEAMIDATION OF MCPA; MCPB AND MCPC</scope>
</reference>
<reference key="6">
    <citation type="journal article" date="2004" name="J. Biol. Chem.">
        <title>Bacillus subtilis CheC and FliY are members of a novel class of CheY-P-hydrolyzing proteins in the chemotactic signal transduction cascade.</title>
        <authorList>
            <person name="Szurmant H."/>
            <person name="Muff T.J."/>
            <person name="Ordal G.W."/>
        </authorList>
    </citation>
    <scope>FUNCTION IN ACTIVATION OF CHEC</scope>
</reference>
<dbReference type="EC" id="3.5.1.44"/>
<dbReference type="EMBL" id="M20144">
    <property type="protein sequence ID" value="AAA61469.1"/>
    <property type="molecule type" value="Genomic_DNA"/>
</dbReference>
<dbReference type="EMBL" id="AL009126">
    <property type="protein sequence ID" value="CAB13519.1"/>
    <property type="molecule type" value="Genomic_DNA"/>
</dbReference>
<dbReference type="PIR" id="B55216">
    <property type="entry name" value="B55216"/>
</dbReference>
<dbReference type="RefSeq" id="NP_389528.1">
    <property type="nucleotide sequence ID" value="NC_000964.3"/>
</dbReference>
<dbReference type="RefSeq" id="WP_003244852.1">
    <property type="nucleotide sequence ID" value="NZ_OZ025638.1"/>
</dbReference>
<dbReference type="SMR" id="P40404"/>
<dbReference type="FunCoup" id="P40404">
    <property type="interactions" value="82"/>
</dbReference>
<dbReference type="IntAct" id="P40404">
    <property type="interactions" value="3"/>
</dbReference>
<dbReference type="STRING" id="224308.BSU16460"/>
<dbReference type="PaxDb" id="224308-BSU16460"/>
<dbReference type="EnsemblBacteria" id="CAB13519">
    <property type="protein sequence ID" value="CAB13519"/>
    <property type="gene ID" value="BSU_16460"/>
</dbReference>
<dbReference type="GeneID" id="939959"/>
<dbReference type="KEGG" id="bsu:BSU16460"/>
<dbReference type="PATRIC" id="fig|224308.179.peg.1787"/>
<dbReference type="eggNOG" id="COG1871">
    <property type="taxonomic scope" value="Bacteria"/>
</dbReference>
<dbReference type="InParanoid" id="P40404"/>
<dbReference type="OrthoDB" id="9807202at2"/>
<dbReference type="PhylomeDB" id="P40404"/>
<dbReference type="BioCyc" id="BSUB:BSU16460-MONOMER"/>
<dbReference type="Proteomes" id="UP000001570">
    <property type="component" value="Chromosome"/>
</dbReference>
<dbReference type="GO" id="GO:0050568">
    <property type="term" value="F:protein-glutamine glutaminase activity"/>
    <property type="evidence" value="ECO:0007669"/>
    <property type="project" value="UniProtKB-UniRule"/>
</dbReference>
<dbReference type="GO" id="GO:0006935">
    <property type="term" value="P:chemotaxis"/>
    <property type="evidence" value="ECO:0007669"/>
    <property type="project" value="UniProtKB-UniRule"/>
</dbReference>
<dbReference type="CDD" id="cd16352">
    <property type="entry name" value="CheD"/>
    <property type="match status" value="1"/>
</dbReference>
<dbReference type="Gene3D" id="3.30.1330.200">
    <property type="match status" value="1"/>
</dbReference>
<dbReference type="HAMAP" id="MF_01440">
    <property type="entry name" value="CheD"/>
    <property type="match status" value="1"/>
</dbReference>
<dbReference type="InterPro" id="IPR038592">
    <property type="entry name" value="CheD-like_sf"/>
</dbReference>
<dbReference type="InterPro" id="IPR005659">
    <property type="entry name" value="Chemorcpt_Glu_NH3ase_CheD"/>
</dbReference>
<dbReference type="InterPro" id="IPR011324">
    <property type="entry name" value="Cytotoxic_necrot_fac-like_cat"/>
</dbReference>
<dbReference type="PANTHER" id="PTHR35147">
    <property type="entry name" value="CHEMORECEPTOR GLUTAMINE DEAMIDASE CHED-RELATED"/>
    <property type="match status" value="1"/>
</dbReference>
<dbReference type="PANTHER" id="PTHR35147:SF1">
    <property type="entry name" value="CHEMORECEPTOR GLUTAMINE DEAMIDASE CHED-RELATED"/>
    <property type="match status" value="1"/>
</dbReference>
<dbReference type="Pfam" id="PF03975">
    <property type="entry name" value="CheD"/>
    <property type="match status" value="1"/>
</dbReference>
<dbReference type="SUPFAM" id="SSF64438">
    <property type="entry name" value="CNF1/YfiH-like putative cysteine hydrolases"/>
    <property type="match status" value="1"/>
</dbReference>
<evidence type="ECO:0000269" key="1">
    <source>
    </source>
</evidence>
<evidence type="ECO:0000269" key="2">
    <source>
    </source>
</evidence>
<evidence type="ECO:0000269" key="3">
    <source>
    </source>
</evidence>
<evidence type="ECO:0000305" key="4"/>
<name>CHED_BACSU</name>
<sequence length="166" mass="18008">MSTTEAVVIKVGIADVKIARFPDTIRTSGLGSCVGLVLYDKEKQTAGLVHVMLPDSTLSKTAELNRAKYADTAVQTTIDMLIEAGCRKFALKAKLAGGSEMFKFKSTNDLMKIGPRNVLAIKEQLSLFNIPIISEDTGGSSGRTIEFEPKSCMLHIRTVKQGEKTI</sequence>
<organism>
    <name type="scientific">Bacillus subtilis (strain 168)</name>
    <dbReference type="NCBI Taxonomy" id="224308"/>
    <lineage>
        <taxon>Bacteria</taxon>
        <taxon>Bacillati</taxon>
        <taxon>Bacillota</taxon>
        <taxon>Bacilli</taxon>
        <taxon>Bacillales</taxon>
        <taxon>Bacillaceae</taxon>
        <taxon>Bacillus</taxon>
    </lineage>
</organism>
<keyword id="KW-0145">Chemotaxis</keyword>
<keyword id="KW-0378">Hydrolase</keyword>
<keyword id="KW-1185">Reference proteome</keyword>
<gene>
    <name type="primary">cheD</name>
    <name type="synonym">ylxK</name>
    <name type="ordered locus">BSU16460</name>
</gene>